<reference key="1">
    <citation type="submission" date="2008-01" db="EMBL/GenBank/DDBJ databases">
        <title>Complete sequence of Shewanella halifaxensis HAW-EB4.</title>
        <authorList>
            <consortium name="US DOE Joint Genome Institute"/>
            <person name="Copeland A."/>
            <person name="Lucas S."/>
            <person name="Lapidus A."/>
            <person name="Glavina del Rio T."/>
            <person name="Dalin E."/>
            <person name="Tice H."/>
            <person name="Bruce D."/>
            <person name="Goodwin L."/>
            <person name="Pitluck S."/>
            <person name="Sims D."/>
            <person name="Brettin T."/>
            <person name="Detter J.C."/>
            <person name="Han C."/>
            <person name="Kuske C.R."/>
            <person name="Schmutz J."/>
            <person name="Larimer F."/>
            <person name="Land M."/>
            <person name="Hauser L."/>
            <person name="Kyrpides N."/>
            <person name="Kim E."/>
            <person name="Zhao J.-S."/>
            <person name="Richardson P."/>
        </authorList>
    </citation>
    <scope>NUCLEOTIDE SEQUENCE [LARGE SCALE GENOMIC DNA]</scope>
    <source>
        <strain>HAW-EB4</strain>
    </source>
</reference>
<feature type="chain" id="PRO_1000088075" description="NAD-dependent malic enzyme">
    <location>
        <begin position="1"/>
        <end position="562"/>
    </location>
</feature>
<feature type="active site" description="Proton donor" evidence="1">
    <location>
        <position position="101"/>
    </location>
</feature>
<feature type="active site" description="Proton acceptor" evidence="1">
    <location>
        <position position="172"/>
    </location>
</feature>
<feature type="binding site" evidence="1">
    <location>
        <position position="154"/>
    </location>
    <ligand>
        <name>NAD(+)</name>
        <dbReference type="ChEBI" id="CHEBI:57540"/>
    </ligand>
</feature>
<feature type="binding site" evidence="1">
    <location>
        <position position="243"/>
    </location>
    <ligand>
        <name>a divalent metal cation</name>
        <dbReference type="ChEBI" id="CHEBI:60240"/>
    </ligand>
</feature>
<feature type="binding site" evidence="1">
    <location>
        <position position="244"/>
    </location>
    <ligand>
        <name>a divalent metal cation</name>
        <dbReference type="ChEBI" id="CHEBI:60240"/>
    </ligand>
</feature>
<feature type="binding site" evidence="1">
    <location>
        <position position="267"/>
    </location>
    <ligand>
        <name>a divalent metal cation</name>
        <dbReference type="ChEBI" id="CHEBI:60240"/>
    </ligand>
</feature>
<feature type="binding site" evidence="1">
    <location>
        <position position="267"/>
    </location>
    <ligand>
        <name>NAD(+)</name>
        <dbReference type="ChEBI" id="CHEBI:57540"/>
    </ligand>
</feature>
<feature type="binding site" evidence="1">
    <location>
        <position position="415"/>
    </location>
    <ligand>
        <name>NAD(+)</name>
        <dbReference type="ChEBI" id="CHEBI:57540"/>
    </ligand>
</feature>
<feature type="site" description="Important for activity" evidence="1">
    <location>
        <position position="267"/>
    </location>
</feature>
<protein>
    <recommendedName>
        <fullName evidence="1">NAD-dependent malic enzyme</fullName>
        <shortName evidence="1">NAD-ME</shortName>
        <ecNumber evidence="1">1.1.1.38</ecNumber>
    </recommendedName>
</protein>
<evidence type="ECO:0000255" key="1">
    <source>
        <dbReference type="HAMAP-Rule" id="MF_01619"/>
    </source>
</evidence>
<proteinExistence type="inferred from homology"/>
<organism>
    <name type="scientific">Shewanella halifaxensis (strain HAW-EB4)</name>
    <dbReference type="NCBI Taxonomy" id="458817"/>
    <lineage>
        <taxon>Bacteria</taxon>
        <taxon>Pseudomonadati</taxon>
        <taxon>Pseudomonadota</taxon>
        <taxon>Gammaproteobacteria</taxon>
        <taxon>Alteromonadales</taxon>
        <taxon>Shewanellaceae</taxon>
        <taxon>Shewanella</taxon>
    </lineage>
</organism>
<keyword id="KW-0479">Metal-binding</keyword>
<keyword id="KW-0520">NAD</keyword>
<keyword id="KW-0560">Oxidoreductase</keyword>
<accession>B0TRQ2</accession>
<gene>
    <name evidence="1" type="primary">maeA</name>
    <name type="ordered locus">Shal_3267</name>
</gene>
<comment type="catalytic activity">
    <reaction evidence="1">
        <text>(S)-malate + NAD(+) = pyruvate + CO2 + NADH</text>
        <dbReference type="Rhea" id="RHEA:12653"/>
        <dbReference type="ChEBI" id="CHEBI:15361"/>
        <dbReference type="ChEBI" id="CHEBI:15589"/>
        <dbReference type="ChEBI" id="CHEBI:16526"/>
        <dbReference type="ChEBI" id="CHEBI:57540"/>
        <dbReference type="ChEBI" id="CHEBI:57945"/>
        <dbReference type="EC" id="1.1.1.38"/>
    </reaction>
</comment>
<comment type="catalytic activity">
    <reaction evidence="1">
        <text>oxaloacetate + H(+) = pyruvate + CO2</text>
        <dbReference type="Rhea" id="RHEA:15641"/>
        <dbReference type="ChEBI" id="CHEBI:15361"/>
        <dbReference type="ChEBI" id="CHEBI:15378"/>
        <dbReference type="ChEBI" id="CHEBI:16452"/>
        <dbReference type="ChEBI" id="CHEBI:16526"/>
        <dbReference type="EC" id="1.1.1.38"/>
    </reaction>
</comment>
<comment type="cofactor">
    <cofactor evidence="1">
        <name>Mg(2+)</name>
        <dbReference type="ChEBI" id="CHEBI:18420"/>
    </cofactor>
    <cofactor evidence="1">
        <name>Mn(2+)</name>
        <dbReference type="ChEBI" id="CHEBI:29035"/>
    </cofactor>
    <text evidence="1">Divalent metal cations. Prefers magnesium or manganese.</text>
</comment>
<comment type="subunit">
    <text evidence="1">Homotetramer.</text>
</comment>
<comment type="similarity">
    <text evidence="1">Belongs to the malic enzymes family.</text>
</comment>
<dbReference type="EC" id="1.1.1.38" evidence="1"/>
<dbReference type="EMBL" id="CP000931">
    <property type="protein sequence ID" value="ABZ77814.1"/>
    <property type="molecule type" value="Genomic_DNA"/>
</dbReference>
<dbReference type="RefSeq" id="WP_012278336.1">
    <property type="nucleotide sequence ID" value="NC_010334.1"/>
</dbReference>
<dbReference type="SMR" id="B0TRQ2"/>
<dbReference type="STRING" id="458817.Shal_3267"/>
<dbReference type="KEGG" id="shl:Shal_3267"/>
<dbReference type="eggNOG" id="COG0281">
    <property type="taxonomic scope" value="Bacteria"/>
</dbReference>
<dbReference type="HOGENOM" id="CLU_011405_5_2_6"/>
<dbReference type="OrthoDB" id="3314528at2"/>
<dbReference type="Proteomes" id="UP000001317">
    <property type="component" value="Chromosome"/>
</dbReference>
<dbReference type="GO" id="GO:0005829">
    <property type="term" value="C:cytosol"/>
    <property type="evidence" value="ECO:0007669"/>
    <property type="project" value="TreeGrafter"/>
</dbReference>
<dbReference type="GO" id="GO:0004471">
    <property type="term" value="F:malate dehydrogenase (decarboxylating) (NAD+) activity"/>
    <property type="evidence" value="ECO:0007669"/>
    <property type="project" value="UniProtKB-UniRule"/>
</dbReference>
<dbReference type="GO" id="GO:0046872">
    <property type="term" value="F:metal ion binding"/>
    <property type="evidence" value="ECO:0007669"/>
    <property type="project" value="UniProtKB-KW"/>
</dbReference>
<dbReference type="GO" id="GO:0051287">
    <property type="term" value="F:NAD binding"/>
    <property type="evidence" value="ECO:0007669"/>
    <property type="project" value="InterPro"/>
</dbReference>
<dbReference type="GO" id="GO:0008948">
    <property type="term" value="F:oxaloacetate decarboxylase activity"/>
    <property type="evidence" value="ECO:0007669"/>
    <property type="project" value="UniProtKB-UniRule"/>
</dbReference>
<dbReference type="GO" id="GO:0006108">
    <property type="term" value="P:malate metabolic process"/>
    <property type="evidence" value="ECO:0007669"/>
    <property type="project" value="TreeGrafter"/>
</dbReference>
<dbReference type="CDD" id="cd05312">
    <property type="entry name" value="NAD_bind_1_malic_enz"/>
    <property type="match status" value="1"/>
</dbReference>
<dbReference type="FunFam" id="3.40.50.10380:FF:000001">
    <property type="entry name" value="NAD-dependent malic enzyme"/>
    <property type="match status" value="1"/>
</dbReference>
<dbReference type="FunFam" id="3.40.50.720:FF:000055">
    <property type="entry name" value="NAD-dependent malic enzyme"/>
    <property type="match status" value="1"/>
</dbReference>
<dbReference type="Gene3D" id="3.40.50.10380">
    <property type="entry name" value="Malic enzyme, N-terminal domain"/>
    <property type="match status" value="1"/>
</dbReference>
<dbReference type="Gene3D" id="3.40.50.720">
    <property type="entry name" value="NAD(P)-binding Rossmann-like Domain"/>
    <property type="match status" value="1"/>
</dbReference>
<dbReference type="HAMAP" id="MF_01619">
    <property type="entry name" value="NAD_malic_enz"/>
    <property type="match status" value="1"/>
</dbReference>
<dbReference type="InterPro" id="IPR046346">
    <property type="entry name" value="Aminoacid_DH-like_N_sf"/>
</dbReference>
<dbReference type="InterPro" id="IPR015884">
    <property type="entry name" value="Malic_enzyme_CS"/>
</dbReference>
<dbReference type="InterPro" id="IPR012301">
    <property type="entry name" value="Malic_N_dom"/>
</dbReference>
<dbReference type="InterPro" id="IPR037062">
    <property type="entry name" value="Malic_N_dom_sf"/>
</dbReference>
<dbReference type="InterPro" id="IPR012302">
    <property type="entry name" value="Malic_NAD-bd"/>
</dbReference>
<dbReference type="InterPro" id="IPR001891">
    <property type="entry name" value="Malic_OxRdtase"/>
</dbReference>
<dbReference type="InterPro" id="IPR036291">
    <property type="entry name" value="NAD(P)-bd_dom_sf"/>
</dbReference>
<dbReference type="InterPro" id="IPR023667">
    <property type="entry name" value="NAD_malic_enz_proteobac"/>
</dbReference>
<dbReference type="NCBIfam" id="NF010052">
    <property type="entry name" value="PRK13529.1"/>
    <property type="match status" value="1"/>
</dbReference>
<dbReference type="PANTHER" id="PTHR23406">
    <property type="entry name" value="MALIC ENZYME-RELATED"/>
    <property type="match status" value="1"/>
</dbReference>
<dbReference type="PANTHER" id="PTHR23406:SF34">
    <property type="entry name" value="NAD-DEPENDENT MALIC ENZYME, MITOCHONDRIAL"/>
    <property type="match status" value="1"/>
</dbReference>
<dbReference type="Pfam" id="PF00390">
    <property type="entry name" value="malic"/>
    <property type="match status" value="1"/>
</dbReference>
<dbReference type="Pfam" id="PF03949">
    <property type="entry name" value="Malic_M"/>
    <property type="match status" value="1"/>
</dbReference>
<dbReference type="PIRSF" id="PIRSF000106">
    <property type="entry name" value="ME"/>
    <property type="match status" value="1"/>
</dbReference>
<dbReference type="PRINTS" id="PR00072">
    <property type="entry name" value="MALOXRDTASE"/>
</dbReference>
<dbReference type="SMART" id="SM01274">
    <property type="entry name" value="malic"/>
    <property type="match status" value="1"/>
</dbReference>
<dbReference type="SMART" id="SM00919">
    <property type="entry name" value="Malic_M"/>
    <property type="match status" value="1"/>
</dbReference>
<dbReference type="SUPFAM" id="SSF53223">
    <property type="entry name" value="Aminoacid dehydrogenase-like, N-terminal domain"/>
    <property type="match status" value="1"/>
</dbReference>
<dbReference type="SUPFAM" id="SSF51735">
    <property type="entry name" value="NAD(P)-binding Rossmann-fold domains"/>
    <property type="match status" value="1"/>
</dbReference>
<dbReference type="PROSITE" id="PS00331">
    <property type="entry name" value="MALIC_ENZYMES"/>
    <property type="match status" value="1"/>
</dbReference>
<sequence>MDDNKRPLYLPFAGPAILEAPLINKGSAFTEEERIFFNLEGLLPHVIETIEEQASRAYDQYKNFSNDLDKHIYLRNIQDTNETLYYRLVQNHITEMMPIIYTPTVGMACERFSKDYRRNRGLFISYANKDRIDDILNNSTRQKVKIIVVTDGERILGLGDQGIGGMGIPIGKLSLYTSCGGISPAYTLPVTLDVGTDNPHLLEDPMYMGMRSPRIGGEEYKEFVEAFMQAVNRRWPDALIQFEDFAQKNAMPLLERYKDQYCCFNDDIQGTAAVTVGSLLAACKAAKSKLSEQRITFLGAGSAGCGIAEAIVAQMVSEGISEAQARKQVFMVDRWGMLQSNMPNLLPFQQKLAQQCDDLTNWDNFSDNISLLDVVNNAKPTVLIGVSGAPGLFTEEIIKAMHSHCPRPIVFPLSNPTSRVEATPKDILHWTQGKALVATGSPFEPVVIDDTTYEIAQCNNSYIFPGIGLGVLASGAKRVSDAMLMASSRALAECSPLAIDGEGSLLPKLEDIHLVSKRIAFAVARVAIEEGHALPTTKELLTYAIEDNFWTAEYRSYKRTAF</sequence>
<name>MAO1_SHEHH</name>